<gene>
    <name type="primary">nolL</name>
    <name type="ordered locus">mlr8757</name>
</gene>
<comment type="function">
    <text>Thought to be an acetyltransferase that modifies the fucose of the nod factor.</text>
</comment>
<comment type="subcellular location">
    <subcellularLocation>
        <location evidence="2">Cell membrane</location>
        <topology evidence="2">Multi-pass membrane protein</topology>
    </subcellularLocation>
</comment>
<comment type="similarity">
    <text evidence="2">Belongs to the acyltransferase 3 family.</text>
</comment>
<accession>Q52778</accession>
<name>NOLL_RHILO</name>
<reference key="1">
    <citation type="journal article" date="1996" name="Mol. Plant Microbe Interact.">
        <title>Novel and complex chromosomal arrangement of Rhizobium loti nodulation genes.</title>
        <authorList>
            <person name="Scott D.B."/>
            <person name="Young C.A."/>
            <person name="Collins-Emerson J.M."/>
            <person name="Terzaghi E.A."/>
            <person name="Rockman E.S."/>
            <person name="Lewis P.E."/>
            <person name="Pankhurst C.E."/>
        </authorList>
    </citation>
    <scope>NUCLEOTIDE SEQUENCE [GENOMIC DNA]</scope>
    <source>
        <strain>NZP 2213</strain>
    </source>
</reference>
<reference key="2">
    <citation type="journal article" date="2000" name="DNA Res.">
        <title>Complete genome structure of the nitrogen-fixing symbiotic bacterium Mesorhizobium loti.</title>
        <authorList>
            <person name="Kaneko T."/>
            <person name="Nakamura Y."/>
            <person name="Sato S."/>
            <person name="Asamizu E."/>
            <person name="Kato T."/>
            <person name="Sasamoto S."/>
            <person name="Watanabe A."/>
            <person name="Idesawa K."/>
            <person name="Ishikawa A."/>
            <person name="Kawashima K."/>
            <person name="Kimura T."/>
            <person name="Kishida Y."/>
            <person name="Kiyokawa C."/>
            <person name="Kohara M."/>
            <person name="Matsumoto M."/>
            <person name="Matsuno A."/>
            <person name="Mochizuki Y."/>
            <person name="Nakayama S."/>
            <person name="Nakazaki N."/>
            <person name="Shimpo S."/>
            <person name="Sugimoto M."/>
            <person name="Takeuchi C."/>
            <person name="Yamada M."/>
            <person name="Tabata S."/>
        </authorList>
    </citation>
    <scope>NUCLEOTIDE SEQUENCE [LARGE SCALE GENOMIC DNA]</scope>
    <source>
        <strain>LMG 29417 / CECT 9101 / MAFF 303099</strain>
    </source>
</reference>
<protein>
    <recommendedName>
        <fullName>Nodulation protein NolL</fullName>
        <ecNumber>2.3.1.-</ecNumber>
    </recommendedName>
</protein>
<feature type="chain" id="PRO_0000208082" description="Nodulation protein NolL">
    <location>
        <begin position="1"/>
        <end position="373"/>
    </location>
</feature>
<feature type="transmembrane region" description="Helical" evidence="1">
    <location>
        <begin position="27"/>
        <end position="47"/>
    </location>
</feature>
<feature type="transmembrane region" description="Helical" evidence="1">
    <location>
        <begin position="62"/>
        <end position="82"/>
    </location>
</feature>
<feature type="transmembrane region" description="Helical" evidence="1">
    <location>
        <begin position="98"/>
        <end position="118"/>
    </location>
</feature>
<feature type="transmembrane region" description="Helical" evidence="1">
    <location>
        <begin position="140"/>
        <end position="160"/>
    </location>
</feature>
<feature type="transmembrane region" description="Helical" evidence="1">
    <location>
        <begin position="164"/>
        <end position="184"/>
    </location>
</feature>
<feature type="transmembrane region" description="Helical" evidence="1">
    <location>
        <begin position="212"/>
        <end position="232"/>
    </location>
</feature>
<feature type="transmembrane region" description="Helical" evidence="1">
    <location>
        <begin position="253"/>
        <end position="273"/>
    </location>
</feature>
<feature type="transmembrane region" description="Helical" evidence="1">
    <location>
        <begin position="286"/>
        <end position="306"/>
    </location>
</feature>
<feature type="transmembrane region" description="Helical" evidence="1">
    <location>
        <begin position="324"/>
        <end position="344"/>
    </location>
</feature>
<feature type="sequence conflict" description="In Ref. 1; AAB50273." evidence="2" ref="1">
    <original>N</original>
    <variation>H</variation>
    <location>
        <position position="4"/>
    </location>
</feature>
<feature type="sequence conflict" description="In Ref. 1; AAB50273." evidence="2" ref="1">
    <original>G</original>
    <variation>A</variation>
    <location>
        <position position="31"/>
    </location>
</feature>
<feature type="sequence conflict" description="In Ref. 1; AAB50273." evidence="2" ref="1">
    <original>M</original>
    <variation>T</variation>
    <location>
        <position position="121"/>
    </location>
</feature>
<feature type="sequence conflict" description="In Ref. 1; AAB50273." evidence="2" ref="1">
    <original>S</original>
    <variation>L</variation>
    <location>
        <position position="132"/>
    </location>
</feature>
<feature type="sequence conflict" description="In Ref. 1; AAB50273." evidence="2" ref="1">
    <original>I</original>
    <variation>M</variation>
    <location>
        <position position="163"/>
    </location>
</feature>
<feature type="sequence conflict" description="In Ref. 1; AAB50273." evidence="2" ref="1">
    <original>W</original>
    <variation>S</variation>
    <location>
        <position position="215"/>
    </location>
</feature>
<feature type="sequence conflict" description="In Ref. 1; AAB50273." evidence="2" ref="1">
    <original>L</original>
    <variation>F</variation>
    <location>
        <position position="221"/>
    </location>
</feature>
<feature type="sequence conflict" description="In Ref. 1; AAB50273." evidence="2" ref="1">
    <original>Q</original>
    <variation>R</variation>
    <location>
        <position position="253"/>
    </location>
</feature>
<feature type="sequence conflict" description="In Ref. 1; AAB50273." evidence="2" ref="1">
    <original>A</original>
    <variation>R</variation>
    <location>
        <position position="268"/>
    </location>
</feature>
<feature type="sequence conflict" description="In Ref. 1; AAB50273." evidence="2" ref="1">
    <original>T</original>
    <variation>A</variation>
    <location>
        <position position="326"/>
    </location>
</feature>
<feature type="sequence conflict" description="In Ref. 1; AAB50273." evidence="2" ref="1">
    <original>R</original>
    <variation>H</variation>
    <location>
        <position position="362"/>
    </location>
</feature>
<feature type="sequence conflict" description="In Ref. 1; AAB50273." evidence="2" ref="1">
    <original>L</original>
    <variation>P</variation>
    <location>
        <position position="365"/>
    </location>
</feature>
<evidence type="ECO:0000255" key="1"/>
<evidence type="ECO:0000305" key="2"/>
<dbReference type="EC" id="2.3.1.-"/>
<dbReference type="EMBL" id="U22899">
    <property type="protein sequence ID" value="AAB50273.1"/>
    <property type="molecule type" value="Genomic_DNA"/>
</dbReference>
<dbReference type="EMBL" id="BA000012">
    <property type="protein sequence ID" value="BAB52514.1"/>
    <property type="molecule type" value="Genomic_DNA"/>
</dbReference>
<dbReference type="RefSeq" id="WP_010913835.1">
    <property type="nucleotide sequence ID" value="NC_002678.2"/>
</dbReference>
<dbReference type="KEGG" id="mlo:mlr8757"/>
<dbReference type="eggNOG" id="COG3594">
    <property type="taxonomic scope" value="Bacteria"/>
</dbReference>
<dbReference type="HOGENOM" id="CLU_741613_0_0_5"/>
<dbReference type="Proteomes" id="UP000000552">
    <property type="component" value="Chromosome"/>
</dbReference>
<dbReference type="GO" id="GO:0005886">
    <property type="term" value="C:plasma membrane"/>
    <property type="evidence" value="ECO:0007669"/>
    <property type="project" value="UniProtKB-SubCell"/>
</dbReference>
<dbReference type="GO" id="GO:0016413">
    <property type="term" value="F:O-acetyltransferase activity"/>
    <property type="evidence" value="ECO:0007669"/>
    <property type="project" value="TreeGrafter"/>
</dbReference>
<dbReference type="GO" id="GO:0009246">
    <property type="term" value="P:enterobacterial common antigen biosynthetic process"/>
    <property type="evidence" value="ECO:0007669"/>
    <property type="project" value="TreeGrafter"/>
</dbReference>
<dbReference type="InterPro" id="IPR002656">
    <property type="entry name" value="Acyl_transf_3_dom"/>
</dbReference>
<dbReference type="InterPro" id="IPR053490">
    <property type="entry name" value="Nod_factor_Fuc_AcT"/>
</dbReference>
<dbReference type="NCBIfam" id="NF042426">
    <property type="entry name" value="fucose_Ac_NolL"/>
    <property type="match status" value="1"/>
</dbReference>
<dbReference type="PANTHER" id="PTHR40074">
    <property type="entry name" value="O-ACETYLTRANSFERASE WECH"/>
    <property type="match status" value="1"/>
</dbReference>
<dbReference type="PANTHER" id="PTHR40074:SF2">
    <property type="entry name" value="O-ACETYLTRANSFERASE WECH"/>
    <property type="match status" value="1"/>
</dbReference>
<dbReference type="Pfam" id="PF01757">
    <property type="entry name" value="Acyl_transf_3"/>
    <property type="match status" value="1"/>
</dbReference>
<proteinExistence type="inferred from homology"/>
<organism>
    <name type="scientific">Mesorhizobium japonicum (strain LMG 29417 / CECT 9101 / MAFF 303099)</name>
    <name type="common">Mesorhizobium loti (strain MAFF 303099)</name>
    <dbReference type="NCBI Taxonomy" id="266835"/>
    <lineage>
        <taxon>Bacteria</taxon>
        <taxon>Pseudomonadati</taxon>
        <taxon>Pseudomonadota</taxon>
        <taxon>Alphaproteobacteria</taxon>
        <taxon>Hyphomicrobiales</taxon>
        <taxon>Phyllobacteriaceae</taxon>
        <taxon>Mesorhizobium</taxon>
    </lineage>
</organism>
<sequence length="373" mass="41866">MLDNIRAGAKGRGSCPAGTNNRDLSFDFAKGILITLVIIGHLLQYLIYQGTDAFWLSPYFKSIYMFHMPLFMAISGYLSSGAILRKSFTQGVGERAMQLLLPMLFWCTLIWTLKSAVIFPMKSLTDTLLDLSTEVIGTYWFIWAAFISFILIRVLTTFNRLSIWIISASAIAVAFAPITLSITPLLKYTYPFYCLGFLFAQPIGWQNGVIWRYKWIFVVLLSIAAFICFLGWGKETYAYNNLVLIHDEQSAKQVFLMFSGSLAASAVAMQSMFQCWRLVYSTRVARFVAVQLGQSTLLLYLVQGAVFRLMDLIQFGEVWNLTTRITFATVLGVAIVVIAMAIRSIARNLGYVSRIVVGAPPRPSLLKSQSVIN</sequence>
<keyword id="KW-0012">Acyltransferase</keyword>
<keyword id="KW-1003">Cell membrane</keyword>
<keyword id="KW-0472">Membrane</keyword>
<keyword id="KW-0536">Nodulation</keyword>
<keyword id="KW-0808">Transferase</keyword>
<keyword id="KW-0812">Transmembrane</keyword>
<keyword id="KW-1133">Transmembrane helix</keyword>